<comment type="function">
    <text evidence="1">Regulator of liver fat metabolism influencing triglyceride secretion and hepatic lipid droplet content. May function as sterol isomerase.</text>
</comment>
<comment type="subcellular location">
    <subcellularLocation>
        <location evidence="1">Endoplasmic reticulum membrane</location>
        <topology evidence="2">Multi-pass membrane protein</topology>
    </subcellularLocation>
    <subcellularLocation>
        <location evidence="1">Endoplasmic reticulum-Golgi intermediate compartment membrane</location>
        <topology evidence="2">Multi-pass membrane protein</topology>
    </subcellularLocation>
</comment>
<comment type="similarity">
    <text evidence="3">Belongs to the TM6SF family.</text>
</comment>
<accession>B0BNG2</accession>
<dbReference type="EMBL" id="CH474031">
    <property type="protein sequence ID" value="EDL90645.1"/>
    <property type="molecule type" value="Genomic_DNA"/>
</dbReference>
<dbReference type="EMBL" id="BC158807">
    <property type="protein sequence ID" value="AAI58808.1"/>
    <property type="molecule type" value="mRNA"/>
</dbReference>
<dbReference type="RefSeq" id="NP_001121126.1">
    <property type="nucleotide sequence ID" value="NM_001127654.1"/>
</dbReference>
<dbReference type="FunCoup" id="B0BNG2">
    <property type="interactions" value="10"/>
</dbReference>
<dbReference type="STRING" id="10116.ENSRNOP00000027800"/>
<dbReference type="PaxDb" id="10116-ENSRNOP00000027800"/>
<dbReference type="PeptideAtlas" id="B0BNG2"/>
<dbReference type="Ensembl" id="ENSRNOT00000027800.8">
    <property type="protein sequence ID" value="ENSRNOP00000027800.4"/>
    <property type="gene ID" value="ENSRNOG00000042237.4"/>
</dbReference>
<dbReference type="GeneID" id="689029"/>
<dbReference type="KEGG" id="rno:689029"/>
<dbReference type="UCSC" id="RGD:1597457">
    <property type="organism name" value="rat"/>
</dbReference>
<dbReference type="AGR" id="RGD:1597457"/>
<dbReference type="CTD" id="53345"/>
<dbReference type="RGD" id="1597457">
    <property type="gene designation" value="Tm6sf2"/>
</dbReference>
<dbReference type="eggNOG" id="ENOG502QRB2">
    <property type="taxonomic scope" value="Eukaryota"/>
</dbReference>
<dbReference type="GeneTree" id="ENSGT00390000012913"/>
<dbReference type="HOGENOM" id="CLU_046717_0_0_1"/>
<dbReference type="InParanoid" id="B0BNG2"/>
<dbReference type="OMA" id="VQMLMYM"/>
<dbReference type="OrthoDB" id="8181520at2759"/>
<dbReference type="PhylomeDB" id="B0BNG2"/>
<dbReference type="TreeFam" id="TF333088"/>
<dbReference type="PRO" id="PR:B0BNG2"/>
<dbReference type="Proteomes" id="UP000002494">
    <property type="component" value="Chromosome 16"/>
</dbReference>
<dbReference type="Proteomes" id="UP000234681">
    <property type="component" value="Chromosome 16"/>
</dbReference>
<dbReference type="Bgee" id="ENSRNOG00000042237">
    <property type="expression patterns" value="Expressed in jejunum and 18 other cell types or tissues"/>
</dbReference>
<dbReference type="GO" id="GO:0005789">
    <property type="term" value="C:endoplasmic reticulum membrane"/>
    <property type="evidence" value="ECO:0000250"/>
    <property type="project" value="UniProtKB"/>
</dbReference>
<dbReference type="GO" id="GO:0033116">
    <property type="term" value="C:endoplasmic reticulum-Golgi intermediate compartment membrane"/>
    <property type="evidence" value="ECO:0000250"/>
    <property type="project" value="UniProtKB"/>
</dbReference>
<dbReference type="GO" id="GO:0042802">
    <property type="term" value="F:identical protein binding"/>
    <property type="evidence" value="ECO:0000266"/>
    <property type="project" value="RGD"/>
</dbReference>
<dbReference type="GO" id="GO:0055088">
    <property type="term" value="P:lipid homeostasis"/>
    <property type="evidence" value="ECO:0000318"/>
    <property type="project" value="GO_Central"/>
</dbReference>
<dbReference type="GO" id="GO:0019216">
    <property type="term" value="P:regulation of lipid metabolic process"/>
    <property type="evidence" value="ECO:0000250"/>
    <property type="project" value="UniProtKB"/>
</dbReference>
<dbReference type="CDD" id="cd21106">
    <property type="entry name" value="TM6SF1-like"/>
    <property type="match status" value="1"/>
</dbReference>
<dbReference type="InterPro" id="IPR033118">
    <property type="entry name" value="EXPERA"/>
</dbReference>
<dbReference type="InterPro" id="IPR047195">
    <property type="entry name" value="TM6SF1-like"/>
</dbReference>
<dbReference type="PANTHER" id="PTHR14568:SF9">
    <property type="entry name" value="TRANSMEMBRANE 6 SUPERFAMILY MEMBER 2"/>
    <property type="match status" value="1"/>
</dbReference>
<dbReference type="PANTHER" id="PTHR14568">
    <property type="entry name" value="TRANSMEMBRANE SUPERFAMILY 6 MEMBER 1/2"/>
    <property type="match status" value="1"/>
</dbReference>
<dbReference type="Pfam" id="PF05241">
    <property type="entry name" value="EBP"/>
    <property type="match status" value="1"/>
</dbReference>
<dbReference type="PROSITE" id="PS51751">
    <property type="entry name" value="EXPERA"/>
    <property type="match status" value="2"/>
</dbReference>
<proteinExistence type="evidence at transcript level"/>
<keyword id="KW-0256">Endoplasmic reticulum</keyword>
<keyword id="KW-0472">Membrane</keyword>
<keyword id="KW-1185">Reference proteome</keyword>
<keyword id="KW-0677">Repeat</keyword>
<keyword id="KW-0812">Transmembrane</keyword>
<keyword id="KW-1133">Transmembrane helix</keyword>
<organism>
    <name type="scientific">Rattus norvegicus</name>
    <name type="common">Rat</name>
    <dbReference type="NCBI Taxonomy" id="10116"/>
    <lineage>
        <taxon>Eukaryota</taxon>
        <taxon>Metazoa</taxon>
        <taxon>Chordata</taxon>
        <taxon>Craniata</taxon>
        <taxon>Vertebrata</taxon>
        <taxon>Euteleostomi</taxon>
        <taxon>Mammalia</taxon>
        <taxon>Eutheria</taxon>
        <taxon>Euarchontoglires</taxon>
        <taxon>Glires</taxon>
        <taxon>Rodentia</taxon>
        <taxon>Myomorpha</taxon>
        <taxon>Muroidea</taxon>
        <taxon>Muridae</taxon>
        <taxon>Murinae</taxon>
        <taxon>Rattus</taxon>
    </lineage>
</organism>
<sequence>MDIPPLAGRTVAMSLGALPVSYVLNQVSAFSQPLCVVLTSALVLGLLFMAVYSLSHGEITYDPLYAVFVVFSFTSVVDLVIALQEDGYLMGLMDFYAKEGEPYLRTAHGIFICYWDGTVHYLLYLTMAGAIRKRKRYRNLGLYWLGSFAMSLLVFLPGNILGKYSSEIRPTFFLAILYMLVPCWAGMRIFNQSPAPSSCTCDVVQEEQKKSLLQRPADLTLIVYLILAAFFTVFRGLVVLDCPADACFIYIYQYEPYLRDPVAYPKLQMLMYLFYALPFYCLAAYALTFPGCSWLPDWALVFAGAIGQAQFSHMGASMHLRTPFTYRVPEDTWATFLLSNLLFALGPHLLALRCLWRPAFFLRAAPPSSPQDQGKKQQ</sequence>
<feature type="chain" id="PRO_0000402385" description="Transmembrane 6 superfamily member 2">
    <location>
        <begin position="1"/>
        <end position="378"/>
    </location>
</feature>
<feature type="transmembrane region" description="Helical; Name=1" evidence="2">
    <location>
        <begin position="34"/>
        <end position="54"/>
    </location>
</feature>
<feature type="transmembrane region" description="Helical; Name=2" evidence="2">
    <location>
        <begin position="63"/>
        <end position="83"/>
    </location>
</feature>
<feature type="transmembrane region" description="Helical; Name=3" evidence="2">
    <location>
        <begin position="110"/>
        <end position="130"/>
    </location>
</feature>
<feature type="transmembrane region" description="Helical; Name=4" evidence="2">
    <location>
        <begin position="140"/>
        <end position="160"/>
    </location>
</feature>
<feature type="transmembrane region" description="Helical; Name=5" evidence="2">
    <location>
        <begin position="170"/>
        <end position="190"/>
    </location>
</feature>
<feature type="transmembrane region" description="Helical; Name=6" evidence="2">
    <location>
        <begin position="219"/>
        <end position="239"/>
    </location>
</feature>
<feature type="transmembrane region" description="Helical; Name=7" evidence="2">
    <location>
        <begin position="269"/>
        <end position="289"/>
    </location>
</feature>
<feature type="transmembrane region" description="Helical; Name=8" evidence="2">
    <location>
        <begin position="291"/>
        <end position="311"/>
    </location>
</feature>
<feature type="transmembrane region" description="Helical; Name=9" evidence="2">
    <location>
        <begin position="332"/>
        <end position="352"/>
    </location>
</feature>
<feature type="domain" description="EXPERA 1" evidence="1">
    <location>
        <begin position="61"/>
        <end position="186"/>
    </location>
</feature>
<feature type="domain" description="EXPERA 2" evidence="1">
    <location>
        <begin position="217"/>
        <end position="351"/>
    </location>
</feature>
<protein>
    <recommendedName>
        <fullName>Transmembrane 6 superfamily member 2</fullName>
    </recommendedName>
</protein>
<gene>
    <name type="primary">Tm6sf2</name>
</gene>
<name>TM6S2_RAT</name>
<evidence type="ECO:0000250" key="1">
    <source>
        <dbReference type="UniProtKB" id="Q9BZW4"/>
    </source>
</evidence>
<evidence type="ECO:0000255" key="2"/>
<evidence type="ECO:0000305" key="3"/>
<reference key="1">
    <citation type="submission" date="2005-09" db="EMBL/GenBank/DDBJ databases">
        <authorList>
            <person name="Mural R.J."/>
            <person name="Adams M.D."/>
            <person name="Myers E.W."/>
            <person name="Smith H.O."/>
            <person name="Venter J.C."/>
        </authorList>
    </citation>
    <scope>NUCLEOTIDE SEQUENCE [LARGE SCALE GENOMIC DNA]</scope>
</reference>
<reference key="2">
    <citation type="journal article" date="2004" name="Genome Res.">
        <title>The status, quality, and expansion of the NIH full-length cDNA project: the Mammalian Gene Collection (MGC).</title>
        <authorList>
            <consortium name="The MGC Project Team"/>
        </authorList>
    </citation>
    <scope>NUCLEOTIDE SEQUENCE [LARGE SCALE MRNA]</scope>
    <source>
        <tissue>Liver</tissue>
    </source>
</reference>